<keyword id="KW-0028">Amino-acid biosynthesis</keyword>
<keyword id="KW-0057">Aromatic amino acid biosynthesis</keyword>
<keyword id="KW-0328">Glycosyltransferase</keyword>
<keyword id="KW-0460">Magnesium</keyword>
<keyword id="KW-0479">Metal-binding</keyword>
<keyword id="KW-1185">Reference proteome</keyword>
<keyword id="KW-0808">Transferase</keyword>
<keyword id="KW-0822">Tryptophan biosynthesis</keyword>
<evidence type="ECO:0000255" key="1">
    <source>
        <dbReference type="HAMAP-Rule" id="MF_00211"/>
    </source>
</evidence>
<dbReference type="EC" id="2.4.2.18" evidence="1"/>
<dbReference type="EMBL" id="CP000383">
    <property type="protein sequence ID" value="ABG60531.1"/>
    <property type="molecule type" value="Genomic_DNA"/>
</dbReference>
<dbReference type="RefSeq" id="WP_011586639.1">
    <property type="nucleotide sequence ID" value="NC_008255.1"/>
</dbReference>
<dbReference type="SMR" id="Q11PY2"/>
<dbReference type="STRING" id="269798.CHU_3292"/>
<dbReference type="KEGG" id="chu:CHU_3292"/>
<dbReference type="eggNOG" id="COG0547">
    <property type="taxonomic scope" value="Bacteria"/>
</dbReference>
<dbReference type="HOGENOM" id="CLU_034315_3_1_10"/>
<dbReference type="OrthoDB" id="9806430at2"/>
<dbReference type="UniPathway" id="UPA00035">
    <property type="reaction ID" value="UER00041"/>
</dbReference>
<dbReference type="Proteomes" id="UP000001822">
    <property type="component" value="Chromosome"/>
</dbReference>
<dbReference type="GO" id="GO:0005829">
    <property type="term" value="C:cytosol"/>
    <property type="evidence" value="ECO:0007669"/>
    <property type="project" value="TreeGrafter"/>
</dbReference>
<dbReference type="GO" id="GO:0004048">
    <property type="term" value="F:anthranilate phosphoribosyltransferase activity"/>
    <property type="evidence" value="ECO:0007669"/>
    <property type="project" value="UniProtKB-UniRule"/>
</dbReference>
<dbReference type="GO" id="GO:0000287">
    <property type="term" value="F:magnesium ion binding"/>
    <property type="evidence" value="ECO:0007669"/>
    <property type="project" value="UniProtKB-UniRule"/>
</dbReference>
<dbReference type="GO" id="GO:0000162">
    <property type="term" value="P:L-tryptophan biosynthetic process"/>
    <property type="evidence" value="ECO:0007669"/>
    <property type="project" value="UniProtKB-UniRule"/>
</dbReference>
<dbReference type="Gene3D" id="3.40.1030.10">
    <property type="entry name" value="Nucleoside phosphorylase/phosphoribosyltransferase catalytic domain"/>
    <property type="match status" value="1"/>
</dbReference>
<dbReference type="Gene3D" id="1.20.970.10">
    <property type="entry name" value="Transferase, Pyrimidine Nucleoside Phosphorylase, Chain C"/>
    <property type="match status" value="1"/>
</dbReference>
<dbReference type="HAMAP" id="MF_00211">
    <property type="entry name" value="TrpD"/>
    <property type="match status" value="1"/>
</dbReference>
<dbReference type="InterPro" id="IPR005940">
    <property type="entry name" value="Anthranilate_Pribosyl_Tfrase"/>
</dbReference>
<dbReference type="InterPro" id="IPR000312">
    <property type="entry name" value="Glycosyl_Trfase_fam3"/>
</dbReference>
<dbReference type="InterPro" id="IPR017459">
    <property type="entry name" value="Glycosyl_Trfase_fam3_N_dom"/>
</dbReference>
<dbReference type="InterPro" id="IPR036320">
    <property type="entry name" value="Glycosyl_Trfase_fam3_N_dom_sf"/>
</dbReference>
<dbReference type="InterPro" id="IPR035902">
    <property type="entry name" value="Nuc_phospho_transferase"/>
</dbReference>
<dbReference type="NCBIfam" id="TIGR01245">
    <property type="entry name" value="trpD"/>
    <property type="match status" value="1"/>
</dbReference>
<dbReference type="PANTHER" id="PTHR43285">
    <property type="entry name" value="ANTHRANILATE PHOSPHORIBOSYLTRANSFERASE"/>
    <property type="match status" value="1"/>
</dbReference>
<dbReference type="PANTHER" id="PTHR43285:SF2">
    <property type="entry name" value="ANTHRANILATE PHOSPHORIBOSYLTRANSFERASE"/>
    <property type="match status" value="1"/>
</dbReference>
<dbReference type="Pfam" id="PF02885">
    <property type="entry name" value="Glycos_trans_3N"/>
    <property type="match status" value="1"/>
</dbReference>
<dbReference type="Pfam" id="PF00591">
    <property type="entry name" value="Glycos_transf_3"/>
    <property type="match status" value="1"/>
</dbReference>
<dbReference type="SUPFAM" id="SSF52418">
    <property type="entry name" value="Nucleoside phosphorylase/phosphoribosyltransferase catalytic domain"/>
    <property type="match status" value="1"/>
</dbReference>
<dbReference type="SUPFAM" id="SSF47648">
    <property type="entry name" value="Nucleoside phosphorylase/phosphoribosyltransferase N-terminal domain"/>
    <property type="match status" value="1"/>
</dbReference>
<gene>
    <name evidence="1" type="primary">trpD</name>
    <name type="ordered locus">CHU_3292</name>
</gene>
<accession>Q11PY2</accession>
<protein>
    <recommendedName>
        <fullName evidence="1">Anthranilate phosphoribosyltransferase</fullName>
        <ecNumber evidence="1">2.4.2.18</ecNumber>
    </recommendedName>
</protein>
<feature type="chain" id="PRO_1000099796" description="Anthranilate phosphoribosyltransferase">
    <location>
        <begin position="1"/>
        <end position="328"/>
    </location>
</feature>
<feature type="binding site" evidence="1">
    <location>
        <position position="79"/>
    </location>
    <ligand>
        <name>5-phospho-alpha-D-ribose 1-diphosphate</name>
        <dbReference type="ChEBI" id="CHEBI:58017"/>
    </ligand>
</feature>
<feature type="binding site" evidence="1">
    <location>
        <position position="79"/>
    </location>
    <ligand>
        <name>anthranilate</name>
        <dbReference type="ChEBI" id="CHEBI:16567"/>
        <label>1</label>
    </ligand>
</feature>
<feature type="binding site" evidence="1">
    <location>
        <begin position="82"/>
        <end position="83"/>
    </location>
    <ligand>
        <name>5-phospho-alpha-D-ribose 1-diphosphate</name>
        <dbReference type="ChEBI" id="CHEBI:58017"/>
    </ligand>
</feature>
<feature type="binding site" evidence="1">
    <location>
        <position position="87"/>
    </location>
    <ligand>
        <name>5-phospho-alpha-D-ribose 1-diphosphate</name>
        <dbReference type="ChEBI" id="CHEBI:58017"/>
    </ligand>
</feature>
<feature type="binding site" evidence="1">
    <location>
        <begin position="89"/>
        <end position="92"/>
    </location>
    <ligand>
        <name>5-phospho-alpha-D-ribose 1-diphosphate</name>
        <dbReference type="ChEBI" id="CHEBI:58017"/>
    </ligand>
</feature>
<feature type="binding site" evidence="1">
    <location>
        <position position="91"/>
    </location>
    <ligand>
        <name>Mg(2+)</name>
        <dbReference type="ChEBI" id="CHEBI:18420"/>
        <label>1</label>
    </ligand>
</feature>
<feature type="binding site" evidence="1">
    <location>
        <begin position="107"/>
        <end position="115"/>
    </location>
    <ligand>
        <name>5-phospho-alpha-D-ribose 1-diphosphate</name>
        <dbReference type="ChEBI" id="CHEBI:58017"/>
    </ligand>
</feature>
<feature type="binding site" evidence="1">
    <location>
        <position position="110"/>
    </location>
    <ligand>
        <name>anthranilate</name>
        <dbReference type="ChEBI" id="CHEBI:16567"/>
        <label>1</label>
    </ligand>
</feature>
<feature type="binding site" evidence="1">
    <location>
        <position position="119"/>
    </location>
    <ligand>
        <name>5-phospho-alpha-D-ribose 1-diphosphate</name>
        <dbReference type="ChEBI" id="CHEBI:58017"/>
    </ligand>
</feature>
<feature type="binding site" evidence="1">
    <location>
        <position position="165"/>
    </location>
    <ligand>
        <name>anthranilate</name>
        <dbReference type="ChEBI" id="CHEBI:16567"/>
        <label>2</label>
    </ligand>
</feature>
<feature type="binding site" evidence="1">
    <location>
        <position position="223"/>
    </location>
    <ligand>
        <name>Mg(2+)</name>
        <dbReference type="ChEBI" id="CHEBI:18420"/>
        <label>2</label>
    </ligand>
</feature>
<feature type="binding site" evidence="1">
    <location>
        <position position="224"/>
    </location>
    <ligand>
        <name>Mg(2+)</name>
        <dbReference type="ChEBI" id="CHEBI:18420"/>
        <label>1</label>
    </ligand>
</feature>
<feature type="binding site" evidence="1">
    <location>
        <position position="224"/>
    </location>
    <ligand>
        <name>Mg(2+)</name>
        <dbReference type="ChEBI" id="CHEBI:18420"/>
        <label>2</label>
    </ligand>
</feature>
<organism>
    <name type="scientific">Cytophaga hutchinsonii (strain ATCC 33406 / DSM 1761 / CIP 103989 / NBRC 15051 / NCIMB 9469 / D465)</name>
    <dbReference type="NCBI Taxonomy" id="269798"/>
    <lineage>
        <taxon>Bacteria</taxon>
        <taxon>Pseudomonadati</taxon>
        <taxon>Bacteroidota</taxon>
        <taxon>Cytophagia</taxon>
        <taxon>Cytophagales</taxon>
        <taxon>Cytophagaceae</taxon>
        <taxon>Cytophaga</taxon>
    </lineage>
</organism>
<proteinExistence type="inferred from homology"/>
<comment type="function">
    <text evidence="1">Catalyzes the transfer of the phosphoribosyl group of 5-phosphorylribose-1-pyrophosphate (PRPP) to anthranilate to yield N-(5'-phosphoribosyl)-anthranilate (PRA).</text>
</comment>
<comment type="catalytic activity">
    <reaction evidence="1">
        <text>N-(5-phospho-beta-D-ribosyl)anthranilate + diphosphate = 5-phospho-alpha-D-ribose 1-diphosphate + anthranilate</text>
        <dbReference type="Rhea" id="RHEA:11768"/>
        <dbReference type="ChEBI" id="CHEBI:16567"/>
        <dbReference type="ChEBI" id="CHEBI:18277"/>
        <dbReference type="ChEBI" id="CHEBI:33019"/>
        <dbReference type="ChEBI" id="CHEBI:58017"/>
        <dbReference type="EC" id="2.4.2.18"/>
    </reaction>
</comment>
<comment type="cofactor">
    <cofactor evidence="1">
        <name>Mg(2+)</name>
        <dbReference type="ChEBI" id="CHEBI:18420"/>
    </cofactor>
    <text evidence="1">Binds 2 magnesium ions per monomer.</text>
</comment>
<comment type="pathway">
    <text evidence="1">Amino-acid biosynthesis; L-tryptophan biosynthesis; L-tryptophan from chorismate: step 2/5.</text>
</comment>
<comment type="subunit">
    <text evidence="1">Homodimer.</text>
</comment>
<comment type="similarity">
    <text evidence="1">Belongs to the anthranilate phosphoribosyltransferase family.</text>
</comment>
<sequence>MKDLLQQLTSHYRLTKEEAKEAMLAIGNGKINAAQVAAFISVYMMRSITVAELQGFREALLEMCLDADLSEYDPIDIVGTGGDGKDTFNISTLSCFVVAGAGIKVAKHGNYAVSSSCGSSNVVEYLGYKFSNSKDVLRKQIEEANFCMLHAPLFHPALKNVAPVRKELGMRTIYNMLGPLVNPALPTYHLLGTFNMDLARLYGYIHQSLNSKFAIVHALDGYDEISLTGGFKVISNQLDRVLEPDDMGLHTYKAAELSGGKTVEDAAKIFIEVLENKSTRAQKEVVLANAGLAISIAKPDISLFDAIATARESLESGQAYECFKKAVK</sequence>
<name>TRPD_CYTH3</name>
<reference key="1">
    <citation type="journal article" date="2007" name="Appl. Environ. Microbiol.">
        <title>Genome sequence of the cellulolytic gliding bacterium Cytophaga hutchinsonii.</title>
        <authorList>
            <person name="Xie G."/>
            <person name="Bruce D.C."/>
            <person name="Challacombe J.F."/>
            <person name="Chertkov O."/>
            <person name="Detter J.C."/>
            <person name="Gilna P."/>
            <person name="Han C.S."/>
            <person name="Lucas S."/>
            <person name="Misra M."/>
            <person name="Myers G.L."/>
            <person name="Richardson P."/>
            <person name="Tapia R."/>
            <person name="Thayer N."/>
            <person name="Thompson L.S."/>
            <person name="Brettin T.S."/>
            <person name="Henrissat B."/>
            <person name="Wilson D.B."/>
            <person name="McBride M.J."/>
        </authorList>
    </citation>
    <scope>NUCLEOTIDE SEQUENCE [LARGE SCALE GENOMIC DNA]</scope>
    <source>
        <strain>ATCC 33406 / DSM 1761 / JCM 20678 / CIP 103989 / IAM 12607 / NBRC 15051 / NCIMB 9469 / D465</strain>
    </source>
</reference>